<keyword id="KW-0964">Secreted</keyword>
<keyword id="KW-0732">Signal</keyword>
<protein>
    <recommendedName>
        <fullName>Proline-rich protein sgp2</fullName>
    </recommendedName>
</protein>
<organism>
    <name type="scientific">Glossina morsitans morsitans</name>
    <name type="common">Savannah tsetse fly</name>
    <dbReference type="NCBI Taxonomy" id="37546"/>
    <lineage>
        <taxon>Eukaryota</taxon>
        <taxon>Metazoa</taxon>
        <taxon>Ecdysozoa</taxon>
        <taxon>Arthropoda</taxon>
        <taxon>Hexapoda</taxon>
        <taxon>Insecta</taxon>
        <taxon>Pterygota</taxon>
        <taxon>Neoptera</taxon>
        <taxon>Endopterygota</taxon>
        <taxon>Diptera</taxon>
        <taxon>Brachycera</taxon>
        <taxon>Muscomorpha</taxon>
        <taxon>Hippoboscoidea</taxon>
        <taxon>Glossinidae</taxon>
        <taxon>Glossina</taxon>
    </lineage>
</organism>
<evidence type="ECO:0000255" key="1"/>
<evidence type="ECO:0000256" key="2">
    <source>
        <dbReference type="SAM" id="MobiDB-lite"/>
    </source>
</evidence>
<evidence type="ECO:0000305" key="3"/>
<proteinExistence type="evidence at transcript level"/>
<comment type="subcellular location">
    <subcellularLocation>
        <location evidence="3">Secreted</location>
    </subcellularLocation>
</comment>
<reference key="1">
    <citation type="journal article" date="2007" name="Insect Biochem. Mol. Biol.">
        <title>The Glossina morsitans tsetse fly saliva: general characteristics and identification of novel salivary proteins.</title>
        <authorList>
            <person name="Van Den Abbeele J."/>
            <person name="Caljon G."/>
            <person name="Dierick J.-F."/>
            <person name="Moens L."/>
            <person name="De Ridder K."/>
            <person name="Coosemans M."/>
        </authorList>
    </citation>
    <scope>NUCLEOTIDE SEQUENCE [MRNA]</scope>
    <source>
        <tissue>Salivary gland</tissue>
    </source>
</reference>
<feature type="signal peptide" evidence="1">
    <location>
        <begin position="1"/>
        <end position="20"/>
    </location>
</feature>
<feature type="chain" id="PRO_0000291614" description="Proline-rich protein sgp2">
    <location>
        <begin position="21"/>
        <end position="132"/>
    </location>
</feature>
<feature type="region of interest" description="Disordered" evidence="2">
    <location>
        <begin position="23"/>
        <end position="62"/>
    </location>
</feature>
<feature type="region of interest" description="Disordered" evidence="2">
    <location>
        <begin position="87"/>
        <end position="132"/>
    </location>
</feature>
<feature type="compositionally biased region" description="Basic and acidic residues" evidence="2">
    <location>
        <begin position="36"/>
        <end position="47"/>
    </location>
</feature>
<feature type="compositionally biased region" description="Polar residues" evidence="2">
    <location>
        <begin position="51"/>
        <end position="62"/>
    </location>
</feature>
<feature type="compositionally biased region" description="Low complexity" evidence="2">
    <location>
        <begin position="91"/>
        <end position="105"/>
    </location>
</feature>
<dbReference type="EMBL" id="EF398272">
    <property type="protein sequence ID" value="ABN80092.1"/>
    <property type="molecule type" value="mRNA"/>
</dbReference>
<dbReference type="EnsemblMetazoa" id="GMOY012015-RA">
    <property type="protein sequence ID" value="GMOY012015-PA"/>
    <property type="gene ID" value="GMOY012015"/>
</dbReference>
<dbReference type="VEuPathDB" id="VectorBase:GMOY012015"/>
<dbReference type="Proteomes" id="UP000092444">
    <property type="component" value="Unassembled WGS sequence"/>
</dbReference>
<dbReference type="GO" id="GO:0005576">
    <property type="term" value="C:extracellular region"/>
    <property type="evidence" value="ECO:0007669"/>
    <property type="project" value="UniProtKB-SubCell"/>
</dbReference>
<accession>A3RGB1</accession>
<sequence>MKYCFVFFVTLICLIANCSARPEGDKGLSAAPTDGKQIERASDKTSEENDGNTNAQGDSNSRLQDFFKQIKQFLDSLNPFKKLLGSGASVPQLPDLPTTPSLPDMPLKPEAILQNPSVPSLPNIPKPSLGLP</sequence>
<gene>
    <name type="primary">sgp2</name>
</gene>
<name>SGP2_GLOMM</name>